<name>EIF3C_CANAL</name>
<evidence type="ECO:0000255" key="1">
    <source>
        <dbReference type="HAMAP-Rule" id="MF_03002"/>
    </source>
</evidence>
<evidence type="ECO:0000255" key="2">
    <source>
        <dbReference type="PROSITE-ProRule" id="PRU01185"/>
    </source>
</evidence>
<evidence type="ECO:0000256" key="3">
    <source>
        <dbReference type="SAM" id="MobiDB-lite"/>
    </source>
</evidence>
<sequence>MSRFFVSGYTSDSSSEEEDLLSTSEEELLSSSDEGEDNESDSSFFGEDDDESEESSSDDEDGRPSGPAYFLKKSFLKGAGGDDSDSDSDDEGRKVVKSAKDKLLDDMKSSIEIINSNKYNNNWSIVLGEFDKFGRFLIRCNQTNLGTPKFYIKLLTSLDNSITETSNNERDDKTLKADEARAFNTLRQRIKKQIREFQVYYDLYKENPEEFDENEDEPLESVQAGLNDNVKNEADNSNVGALASNRVLSPIFHTLKTISESRGKKNIDKLEQIATLEKLLEANVSKSSPFELISIYQMLLSVRFDASSNQAFMPLEQWQKNEQDLGKLLDLLEANVDTYQVSELGSTTDDIDIEPVANAQGVKVIFGSITSSIDRLDDELTKSLQHTDPHSTEYVERLKDESTIYNLIVRGQAYVESITPEDVKYKSEQLARIVLRRLEHIYYKPKQLIKANEEEAWRNIEYNSSIVSKGSSVDEVIDQLTEFLQKQQKNKTYGKHAILFSIYYYAVNSQYEKAKELFLRSQFYSNINSAESSLQVQYNRALVQLGLSAFRAGSIEESHKILNEIVNSQRSKELLGQGFNSKFPNQATVLERQKLLPFHQHINLELLECVFMTCSLLIEIPTLAAIANNHKDSKRKNASLKSFKSKLDFHDRQFFTGPPESIKDHIVHASIALQKGDWLKSYNLLSSIKIWKLFPDNDKLLAMMKNQLQIEGLRTYIFTYKSVFKKLSIEKLQQIFQLSKDEVVSILEKMITTGNVSGGEIIDNKFISFTSTTEPQRSKLQELAIVLNEKIQLLTEKNEKTQSNGYGKKQQNKDQQNQQQQNQNQNQQQQQNQQQQQQQQSSQQQSNNILSEESANKFRYANVNSNNDEFQATA</sequence>
<protein>
    <recommendedName>
        <fullName evidence="1">Eukaryotic translation initiation factor 3 subunit C</fullName>
        <shortName evidence="1">eIF3c</shortName>
    </recommendedName>
    <alternativeName>
        <fullName evidence="1">Eukaryotic translation initiation factor 3 93 kDa subunit homolog</fullName>
        <shortName evidence="1">eIF3 p93</shortName>
    </alternativeName>
    <alternativeName>
        <fullName evidence="1">Translation initiation factor eIF3, p93 subunit homolog</fullName>
    </alternativeName>
</protein>
<accession>Q5AML1</accession>
<accession>A0A1D8PLB2</accession>
<comment type="function">
    <text evidence="1">Component of the eukaryotic translation initiation factor 3 (eIF-3) complex, which is involved in protein synthesis of a specialized repertoire of mRNAs and, together with other initiation factors, stimulates binding of mRNA and methionyl-tRNAi to the 40S ribosome. The eIF-3 complex specifically targets and initiates translation of a subset of mRNAs involved in cell proliferation.</text>
</comment>
<comment type="subunit">
    <text evidence="1">Component of the eukaryotic translation initiation factor 3 (eIF-3) complex.</text>
</comment>
<comment type="subcellular location">
    <subcellularLocation>
        <location evidence="1">Cytoplasm</location>
    </subcellularLocation>
</comment>
<comment type="similarity">
    <text evidence="1">Belongs to the eIF-3 subunit C family.</text>
</comment>
<dbReference type="EMBL" id="CP017626">
    <property type="protein sequence ID" value="AOW28930.1"/>
    <property type="molecule type" value="Genomic_DNA"/>
</dbReference>
<dbReference type="RefSeq" id="XP_722707.2">
    <property type="nucleotide sequence ID" value="XM_717614.2"/>
</dbReference>
<dbReference type="SMR" id="Q5AML1"/>
<dbReference type="BioGRID" id="1218529">
    <property type="interactions" value="2"/>
</dbReference>
<dbReference type="FunCoup" id="Q5AML1">
    <property type="interactions" value="1250"/>
</dbReference>
<dbReference type="STRING" id="237561.Q5AML1"/>
<dbReference type="EnsemblFungi" id="C4_01490W_A-T">
    <property type="protein sequence ID" value="C4_01490W_A-T-p1"/>
    <property type="gene ID" value="C4_01490W_A"/>
</dbReference>
<dbReference type="GeneID" id="3635618"/>
<dbReference type="KEGG" id="cal:CAALFM_C401490WA"/>
<dbReference type="CGD" id="CAL0000176830">
    <property type="gene designation" value="NIP1"/>
</dbReference>
<dbReference type="VEuPathDB" id="FungiDB:C4_01490W_A"/>
<dbReference type="eggNOG" id="KOG1076">
    <property type="taxonomic scope" value="Eukaryota"/>
</dbReference>
<dbReference type="HOGENOM" id="CLU_004304_0_2_1"/>
<dbReference type="InParanoid" id="Q5AML1"/>
<dbReference type="OrthoDB" id="29647at2759"/>
<dbReference type="PRO" id="PR:Q5AML1"/>
<dbReference type="Proteomes" id="UP000000559">
    <property type="component" value="Chromosome 4"/>
</dbReference>
<dbReference type="GO" id="GO:0010494">
    <property type="term" value="C:cytoplasmic stress granule"/>
    <property type="evidence" value="ECO:0007669"/>
    <property type="project" value="EnsemblFungi"/>
</dbReference>
<dbReference type="GO" id="GO:0016282">
    <property type="term" value="C:eukaryotic 43S preinitiation complex"/>
    <property type="evidence" value="ECO:0007669"/>
    <property type="project" value="UniProtKB-UniRule"/>
</dbReference>
<dbReference type="GO" id="GO:0033290">
    <property type="term" value="C:eukaryotic 48S preinitiation complex"/>
    <property type="evidence" value="ECO:0007669"/>
    <property type="project" value="UniProtKB-UniRule"/>
</dbReference>
<dbReference type="GO" id="GO:0005852">
    <property type="term" value="C:eukaryotic translation initiation factor 3 complex"/>
    <property type="evidence" value="ECO:0000318"/>
    <property type="project" value="GO_Central"/>
</dbReference>
<dbReference type="GO" id="GO:0071540">
    <property type="term" value="C:eukaryotic translation initiation factor 3 complex, eIF3e"/>
    <property type="evidence" value="ECO:0007669"/>
    <property type="project" value="EnsemblFungi"/>
</dbReference>
<dbReference type="GO" id="GO:0071541">
    <property type="term" value="C:eukaryotic translation initiation factor 3 complex, eIF3m"/>
    <property type="evidence" value="ECO:0007669"/>
    <property type="project" value="EnsemblFungi"/>
</dbReference>
<dbReference type="GO" id="GO:0043614">
    <property type="term" value="C:multi-eIF complex"/>
    <property type="evidence" value="ECO:0007669"/>
    <property type="project" value="EnsemblFungi"/>
</dbReference>
<dbReference type="GO" id="GO:0003723">
    <property type="term" value="F:RNA binding"/>
    <property type="evidence" value="ECO:0007669"/>
    <property type="project" value="InterPro"/>
</dbReference>
<dbReference type="GO" id="GO:0003743">
    <property type="term" value="F:translation initiation factor activity"/>
    <property type="evidence" value="ECO:0007669"/>
    <property type="project" value="UniProtKB-UniRule"/>
</dbReference>
<dbReference type="GO" id="GO:0031369">
    <property type="term" value="F:translation initiation factor binding"/>
    <property type="evidence" value="ECO:0000318"/>
    <property type="project" value="GO_Central"/>
</dbReference>
<dbReference type="GO" id="GO:0001732">
    <property type="term" value="P:formation of cytoplasmic translation initiation complex"/>
    <property type="evidence" value="ECO:0007669"/>
    <property type="project" value="UniProtKB-UniRule"/>
</dbReference>
<dbReference type="GO" id="GO:0006413">
    <property type="term" value="P:translational initiation"/>
    <property type="evidence" value="ECO:0000318"/>
    <property type="project" value="GO_Central"/>
</dbReference>
<dbReference type="HAMAP" id="MF_03002">
    <property type="entry name" value="eIF3c"/>
    <property type="match status" value="1"/>
</dbReference>
<dbReference type="InterPro" id="IPR027516">
    <property type="entry name" value="EIF3C"/>
</dbReference>
<dbReference type="InterPro" id="IPR008905">
    <property type="entry name" value="EIF3C_N_dom"/>
</dbReference>
<dbReference type="InterPro" id="IPR000717">
    <property type="entry name" value="PCI_dom"/>
</dbReference>
<dbReference type="PANTHER" id="PTHR13937">
    <property type="entry name" value="EUKARYOTIC TRANSLATION INITATION FACTOR 3, SUBUNIT 8 EIF3S8 -RELATED"/>
    <property type="match status" value="1"/>
</dbReference>
<dbReference type="PANTHER" id="PTHR13937:SF0">
    <property type="entry name" value="EUKARYOTIC TRANSLATION INITIATION FACTOR 3 SUBUNIT C-RELATED"/>
    <property type="match status" value="1"/>
</dbReference>
<dbReference type="Pfam" id="PF05470">
    <property type="entry name" value="eIF-3c_N"/>
    <property type="match status" value="2"/>
</dbReference>
<dbReference type="Pfam" id="PF01399">
    <property type="entry name" value="PCI"/>
    <property type="match status" value="1"/>
</dbReference>
<dbReference type="SMART" id="SM00088">
    <property type="entry name" value="PINT"/>
    <property type="match status" value="1"/>
</dbReference>
<dbReference type="PROSITE" id="PS50250">
    <property type="entry name" value="PCI"/>
    <property type="match status" value="1"/>
</dbReference>
<gene>
    <name evidence="1" type="primary">NIP1</name>
    <name type="ordered locus">CAALFM_C401490WA</name>
    <name type="ORF">CaO19.12105</name>
    <name type="ORF">CaO19.4635</name>
</gene>
<organism>
    <name type="scientific">Candida albicans (strain SC5314 / ATCC MYA-2876)</name>
    <name type="common">Yeast</name>
    <dbReference type="NCBI Taxonomy" id="237561"/>
    <lineage>
        <taxon>Eukaryota</taxon>
        <taxon>Fungi</taxon>
        <taxon>Dikarya</taxon>
        <taxon>Ascomycota</taxon>
        <taxon>Saccharomycotina</taxon>
        <taxon>Pichiomycetes</taxon>
        <taxon>Debaryomycetaceae</taxon>
        <taxon>Candida/Lodderomyces clade</taxon>
        <taxon>Candida</taxon>
    </lineage>
</organism>
<feature type="chain" id="PRO_0000364278" description="Eukaryotic translation initiation factor 3 subunit C">
    <location>
        <begin position="1"/>
        <end position="874"/>
    </location>
</feature>
<feature type="domain" description="PCI" evidence="2">
    <location>
        <begin position="598"/>
        <end position="774"/>
    </location>
</feature>
<feature type="region of interest" description="Disordered" evidence="3">
    <location>
        <begin position="1"/>
        <end position="70"/>
    </location>
</feature>
<feature type="region of interest" description="Disordered" evidence="3">
    <location>
        <begin position="797"/>
        <end position="874"/>
    </location>
</feature>
<feature type="compositionally biased region" description="Acidic residues" evidence="3">
    <location>
        <begin position="14"/>
        <end position="61"/>
    </location>
</feature>
<feature type="compositionally biased region" description="Low complexity" evidence="3">
    <location>
        <begin position="813"/>
        <end position="848"/>
    </location>
</feature>
<feature type="compositionally biased region" description="Polar residues" evidence="3">
    <location>
        <begin position="862"/>
        <end position="874"/>
    </location>
</feature>
<reference key="1">
    <citation type="journal article" date="2004" name="Proc. Natl. Acad. Sci. U.S.A.">
        <title>The diploid genome sequence of Candida albicans.</title>
        <authorList>
            <person name="Jones T."/>
            <person name="Federspiel N.A."/>
            <person name="Chibana H."/>
            <person name="Dungan J."/>
            <person name="Kalman S."/>
            <person name="Magee B.B."/>
            <person name="Newport G."/>
            <person name="Thorstenson Y.R."/>
            <person name="Agabian N."/>
            <person name="Magee P.T."/>
            <person name="Davis R.W."/>
            <person name="Scherer S."/>
        </authorList>
    </citation>
    <scope>NUCLEOTIDE SEQUENCE [LARGE SCALE GENOMIC DNA]</scope>
    <source>
        <strain>SC5314 / ATCC MYA-2876</strain>
    </source>
</reference>
<reference key="2">
    <citation type="journal article" date="2007" name="Genome Biol.">
        <title>Assembly of the Candida albicans genome into sixteen supercontigs aligned on the eight chromosomes.</title>
        <authorList>
            <person name="van het Hoog M."/>
            <person name="Rast T.J."/>
            <person name="Martchenko M."/>
            <person name="Grindle S."/>
            <person name="Dignard D."/>
            <person name="Hogues H."/>
            <person name="Cuomo C."/>
            <person name="Berriman M."/>
            <person name="Scherer S."/>
            <person name="Magee B.B."/>
            <person name="Whiteway M."/>
            <person name="Chibana H."/>
            <person name="Nantel A."/>
            <person name="Magee P.T."/>
        </authorList>
    </citation>
    <scope>GENOME REANNOTATION</scope>
    <source>
        <strain>SC5314 / ATCC MYA-2876</strain>
    </source>
</reference>
<reference key="3">
    <citation type="journal article" date="2013" name="Genome Biol.">
        <title>Assembly of a phased diploid Candida albicans genome facilitates allele-specific measurements and provides a simple model for repeat and indel structure.</title>
        <authorList>
            <person name="Muzzey D."/>
            <person name="Schwartz K."/>
            <person name="Weissman J.S."/>
            <person name="Sherlock G."/>
        </authorList>
    </citation>
    <scope>NUCLEOTIDE SEQUENCE [LARGE SCALE GENOMIC DNA]</scope>
    <scope>GENOME REANNOTATION</scope>
    <source>
        <strain>SC5314 / ATCC MYA-2876</strain>
    </source>
</reference>
<keyword id="KW-0963">Cytoplasm</keyword>
<keyword id="KW-0396">Initiation factor</keyword>
<keyword id="KW-0648">Protein biosynthesis</keyword>
<keyword id="KW-1185">Reference proteome</keyword>
<proteinExistence type="inferred from homology"/>